<proteinExistence type="inferred from homology"/>
<organism>
    <name type="scientific">Shewanella sp. (strain MR-4)</name>
    <dbReference type="NCBI Taxonomy" id="60480"/>
    <lineage>
        <taxon>Bacteria</taxon>
        <taxon>Pseudomonadati</taxon>
        <taxon>Pseudomonadota</taxon>
        <taxon>Gammaproteobacteria</taxon>
        <taxon>Alteromonadales</taxon>
        <taxon>Shewanellaceae</taxon>
        <taxon>Shewanella</taxon>
    </lineage>
</organism>
<keyword id="KW-0067">ATP-binding</keyword>
<keyword id="KW-0319">Glycerol metabolism</keyword>
<keyword id="KW-0418">Kinase</keyword>
<keyword id="KW-0547">Nucleotide-binding</keyword>
<keyword id="KW-0808">Transferase</keyword>
<evidence type="ECO:0000255" key="1">
    <source>
        <dbReference type="HAMAP-Rule" id="MF_00186"/>
    </source>
</evidence>
<dbReference type="EC" id="2.7.1.30" evidence="1"/>
<dbReference type="EMBL" id="CP000446">
    <property type="protein sequence ID" value="ABI40647.1"/>
    <property type="molecule type" value="Genomic_DNA"/>
</dbReference>
<dbReference type="RefSeq" id="WP_011624310.1">
    <property type="nucleotide sequence ID" value="NC_008321.1"/>
</dbReference>
<dbReference type="SMR" id="Q0HE70"/>
<dbReference type="KEGG" id="she:Shewmr4_3583"/>
<dbReference type="HOGENOM" id="CLU_009281_2_3_6"/>
<dbReference type="UniPathway" id="UPA00618">
    <property type="reaction ID" value="UER00672"/>
</dbReference>
<dbReference type="GO" id="GO:0005829">
    <property type="term" value="C:cytosol"/>
    <property type="evidence" value="ECO:0007669"/>
    <property type="project" value="TreeGrafter"/>
</dbReference>
<dbReference type="GO" id="GO:0005524">
    <property type="term" value="F:ATP binding"/>
    <property type="evidence" value="ECO:0007669"/>
    <property type="project" value="UniProtKB-UniRule"/>
</dbReference>
<dbReference type="GO" id="GO:0004370">
    <property type="term" value="F:glycerol kinase activity"/>
    <property type="evidence" value="ECO:0000250"/>
    <property type="project" value="UniProtKB"/>
</dbReference>
<dbReference type="GO" id="GO:0019563">
    <property type="term" value="P:glycerol catabolic process"/>
    <property type="evidence" value="ECO:0007669"/>
    <property type="project" value="UniProtKB-UniRule"/>
</dbReference>
<dbReference type="GO" id="GO:0006071">
    <property type="term" value="P:glycerol metabolic process"/>
    <property type="evidence" value="ECO:0000250"/>
    <property type="project" value="UniProtKB"/>
</dbReference>
<dbReference type="GO" id="GO:0006072">
    <property type="term" value="P:glycerol-3-phosphate metabolic process"/>
    <property type="evidence" value="ECO:0007669"/>
    <property type="project" value="InterPro"/>
</dbReference>
<dbReference type="CDD" id="cd07786">
    <property type="entry name" value="FGGY_EcGK_like"/>
    <property type="match status" value="1"/>
</dbReference>
<dbReference type="FunFam" id="3.30.420.40:FF:000007">
    <property type="entry name" value="Glycerol kinase"/>
    <property type="match status" value="1"/>
</dbReference>
<dbReference type="FunFam" id="3.30.420.40:FF:000008">
    <property type="entry name" value="Glycerol kinase"/>
    <property type="match status" value="1"/>
</dbReference>
<dbReference type="Gene3D" id="3.30.420.40">
    <property type="match status" value="2"/>
</dbReference>
<dbReference type="HAMAP" id="MF_00186">
    <property type="entry name" value="Glycerol_kin"/>
    <property type="match status" value="1"/>
</dbReference>
<dbReference type="InterPro" id="IPR043129">
    <property type="entry name" value="ATPase_NBD"/>
</dbReference>
<dbReference type="InterPro" id="IPR000577">
    <property type="entry name" value="Carb_kinase_FGGY"/>
</dbReference>
<dbReference type="InterPro" id="IPR018483">
    <property type="entry name" value="Carb_kinase_FGGY_CS"/>
</dbReference>
<dbReference type="InterPro" id="IPR018485">
    <property type="entry name" value="FGGY_C"/>
</dbReference>
<dbReference type="InterPro" id="IPR018484">
    <property type="entry name" value="FGGY_N"/>
</dbReference>
<dbReference type="InterPro" id="IPR005999">
    <property type="entry name" value="Glycerol_kin"/>
</dbReference>
<dbReference type="NCBIfam" id="TIGR01311">
    <property type="entry name" value="glycerol_kin"/>
    <property type="match status" value="1"/>
</dbReference>
<dbReference type="NCBIfam" id="NF000756">
    <property type="entry name" value="PRK00047.1"/>
    <property type="match status" value="1"/>
</dbReference>
<dbReference type="PANTHER" id="PTHR10196:SF69">
    <property type="entry name" value="GLYCEROL KINASE"/>
    <property type="match status" value="1"/>
</dbReference>
<dbReference type="PANTHER" id="PTHR10196">
    <property type="entry name" value="SUGAR KINASE"/>
    <property type="match status" value="1"/>
</dbReference>
<dbReference type="Pfam" id="PF02782">
    <property type="entry name" value="FGGY_C"/>
    <property type="match status" value="1"/>
</dbReference>
<dbReference type="Pfam" id="PF00370">
    <property type="entry name" value="FGGY_N"/>
    <property type="match status" value="1"/>
</dbReference>
<dbReference type="PIRSF" id="PIRSF000538">
    <property type="entry name" value="GlpK"/>
    <property type="match status" value="1"/>
</dbReference>
<dbReference type="SUPFAM" id="SSF53067">
    <property type="entry name" value="Actin-like ATPase domain"/>
    <property type="match status" value="2"/>
</dbReference>
<dbReference type="PROSITE" id="PS00933">
    <property type="entry name" value="FGGY_KINASES_1"/>
    <property type="match status" value="1"/>
</dbReference>
<dbReference type="PROSITE" id="PS00445">
    <property type="entry name" value="FGGY_KINASES_2"/>
    <property type="match status" value="1"/>
</dbReference>
<comment type="function">
    <text evidence="1">Key enzyme in the regulation of glycerol uptake and metabolism. Catalyzes the phosphorylation of glycerol to yield sn-glycerol 3-phosphate.</text>
</comment>
<comment type="catalytic activity">
    <reaction evidence="1">
        <text>glycerol + ATP = sn-glycerol 3-phosphate + ADP + H(+)</text>
        <dbReference type="Rhea" id="RHEA:21644"/>
        <dbReference type="ChEBI" id="CHEBI:15378"/>
        <dbReference type="ChEBI" id="CHEBI:17754"/>
        <dbReference type="ChEBI" id="CHEBI:30616"/>
        <dbReference type="ChEBI" id="CHEBI:57597"/>
        <dbReference type="ChEBI" id="CHEBI:456216"/>
        <dbReference type="EC" id="2.7.1.30"/>
    </reaction>
</comment>
<comment type="activity regulation">
    <text evidence="1">Inhibited by fructose 1,6-bisphosphate (FBP).</text>
</comment>
<comment type="pathway">
    <text evidence="1">Polyol metabolism; glycerol degradation via glycerol kinase pathway; sn-glycerol 3-phosphate from glycerol: step 1/1.</text>
</comment>
<comment type="similarity">
    <text evidence="1">Belongs to the FGGY kinase family.</text>
</comment>
<feature type="chain" id="PRO_1000020783" description="Glycerol kinase">
    <location>
        <begin position="1"/>
        <end position="494"/>
    </location>
</feature>
<feature type="binding site" evidence="1">
    <location>
        <position position="13"/>
    </location>
    <ligand>
        <name>ADP</name>
        <dbReference type="ChEBI" id="CHEBI:456216"/>
    </ligand>
</feature>
<feature type="binding site" evidence="1">
    <location>
        <position position="13"/>
    </location>
    <ligand>
        <name>ATP</name>
        <dbReference type="ChEBI" id="CHEBI:30616"/>
    </ligand>
</feature>
<feature type="binding site" evidence="1">
    <location>
        <position position="13"/>
    </location>
    <ligand>
        <name>sn-glycerol 3-phosphate</name>
        <dbReference type="ChEBI" id="CHEBI:57597"/>
    </ligand>
</feature>
<feature type="binding site" evidence="1">
    <location>
        <position position="14"/>
    </location>
    <ligand>
        <name>ATP</name>
        <dbReference type="ChEBI" id="CHEBI:30616"/>
    </ligand>
</feature>
<feature type="binding site" evidence="1">
    <location>
        <position position="15"/>
    </location>
    <ligand>
        <name>ATP</name>
        <dbReference type="ChEBI" id="CHEBI:30616"/>
    </ligand>
</feature>
<feature type="binding site" evidence="1">
    <location>
        <position position="17"/>
    </location>
    <ligand>
        <name>ADP</name>
        <dbReference type="ChEBI" id="CHEBI:456216"/>
    </ligand>
</feature>
<feature type="binding site" evidence="1">
    <location>
        <position position="83"/>
    </location>
    <ligand>
        <name>glycerol</name>
        <dbReference type="ChEBI" id="CHEBI:17754"/>
    </ligand>
</feature>
<feature type="binding site" evidence="1">
    <location>
        <position position="83"/>
    </location>
    <ligand>
        <name>sn-glycerol 3-phosphate</name>
        <dbReference type="ChEBI" id="CHEBI:57597"/>
    </ligand>
</feature>
<feature type="binding site" evidence="1">
    <location>
        <position position="84"/>
    </location>
    <ligand>
        <name>glycerol</name>
        <dbReference type="ChEBI" id="CHEBI:17754"/>
    </ligand>
</feature>
<feature type="binding site" evidence="1">
    <location>
        <position position="84"/>
    </location>
    <ligand>
        <name>sn-glycerol 3-phosphate</name>
        <dbReference type="ChEBI" id="CHEBI:57597"/>
    </ligand>
</feature>
<feature type="binding site" evidence="1">
    <location>
        <position position="135"/>
    </location>
    <ligand>
        <name>glycerol</name>
        <dbReference type="ChEBI" id="CHEBI:17754"/>
    </ligand>
</feature>
<feature type="binding site" evidence="1">
    <location>
        <position position="135"/>
    </location>
    <ligand>
        <name>sn-glycerol 3-phosphate</name>
        <dbReference type="ChEBI" id="CHEBI:57597"/>
    </ligand>
</feature>
<feature type="binding site" evidence="1">
    <location>
        <position position="244"/>
    </location>
    <ligand>
        <name>glycerol</name>
        <dbReference type="ChEBI" id="CHEBI:17754"/>
    </ligand>
</feature>
<feature type="binding site" evidence="1">
    <location>
        <position position="244"/>
    </location>
    <ligand>
        <name>sn-glycerol 3-phosphate</name>
        <dbReference type="ChEBI" id="CHEBI:57597"/>
    </ligand>
</feature>
<feature type="binding site" evidence="1">
    <location>
        <position position="245"/>
    </location>
    <ligand>
        <name>glycerol</name>
        <dbReference type="ChEBI" id="CHEBI:17754"/>
    </ligand>
</feature>
<feature type="binding site" evidence="1">
    <location>
        <position position="266"/>
    </location>
    <ligand>
        <name>ADP</name>
        <dbReference type="ChEBI" id="CHEBI:456216"/>
    </ligand>
</feature>
<feature type="binding site" evidence="1">
    <location>
        <position position="266"/>
    </location>
    <ligand>
        <name>ATP</name>
        <dbReference type="ChEBI" id="CHEBI:30616"/>
    </ligand>
</feature>
<feature type="binding site" evidence="1">
    <location>
        <position position="309"/>
    </location>
    <ligand>
        <name>ADP</name>
        <dbReference type="ChEBI" id="CHEBI:456216"/>
    </ligand>
</feature>
<feature type="binding site" evidence="1">
    <location>
        <position position="309"/>
    </location>
    <ligand>
        <name>ATP</name>
        <dbReference type="ChEBI" id="CHEBI:30616"/>
    </ligand>
</feature>
<feature type="binding site" evidence="1">
    <location>
        <position position="313"/>
    </location>
    <ligand>
        <name>ATP</name>
        <dbReference type="ChEBI" id="CHEBI:30616"/>
    </ligand>
</feature>
<feature type="binding site" evidence="1">
    <location>
        <position position="410"/>
    </location>
    <ligand>
        <name>ADP</name>
        <dbReference type="ChEBI" id="CHEBI:456216"/>
    </ligand>
</feature>
<feature type="binding site" evidence="1">
    <location>
        <position position="410"/>
    </location>
    <ligand>
        <name>ATP</name>
        <dbReference type="ChEBI" id="CHEBI:30616"/>
    </ligand>
</feature>
<feature type="binding site" evidence="1">
    <location>
        <position position="414"/>
    </location>
    <ligand>
        <name>ADP</name>
        <dbReference type="ChEBI" id="CHEBI:456216"/>
    </ligand>
</feature>
<reference key="1">
    <citation type="submission" date="2006-08" db="EMBL/GenBank/DDBJ databases">
        <title>Complete sequence of Shewanella sp. MR-4.</title>
        <authorList>
            <consortium name="US DOE Joint Genome Institute"/>
            <person name="Copeland A."/>
            <person name="Lucas S."/>
            <person name="Lapidus A."/>
            <person name="Barry K."/>
            <person name="Detter J.C."/>
            <person name="Glavina del Rio T."/>
            <person name="Hammon N."/>
            <person name="Israni S."/>
            <person name="Dalin E."/>
            <person name="Tice H."/>
            <person name="Pitluck S."/>
            <person name="Kiss H."/>
            <person name="Brettin T."/>
            <person name="Bruce D."/>
            <person name="Han C."/>
            <person name="Tapia R."/>
            <person name="Gilna P."/>
            <person name="Schmutz J."/>
            <person name="Larimer F."/>
            <person name="Land M."/>
            <person name="Hauser L."/>
            <person name="Kyrpides N."/>
            <person name="Mikhailova N."/>
            <person name="Nealson K."/>
            <person name="Konstantinidis K."/>
            <person name="Klappenbach J."/>
            <person name="Tiedje J."/>
            <person name="Richardson P."/>
        </authorList>
    </citation>
    <scope>NUCLEOTIDE SEQUENCE [LARGE SCALE GENOMIC DNA]</scope>
    <source>
        <strain>MR-4</strain>
    </source>
</reference>
<protein>
    <recommendedName>
        <fullName evidence="1">Glycerol kinase</fullName>
        <ecNumber evidence="1">2.7.1.30</ecNumber>
    </recommendedName>
    <alternativeName>
        <fullName evidence="1">ATP:glycerol 3-phosphotransferase</fullName>
    </alternativeName>
    <alternativeName>
        <fullName evidence="1">Glycerokinase</fullName>
        <shortName evidence="1">GK</shortName>
    </alternativeName>
</protein>
<name>GLPK_SHESM</name>
<accession>Q0HE70</accession>
<sequence>MQKKYVVALDQGTTSSRAIVFDHDANIVSVSQREFTQLYPNPGWVEHDPMEIWASQSSVLIESLARAGIHSDEVAAIGITNQRETTIIWEKATGKPVYNAIVWQCRRSSEICEQLKAQGLEDYVRENTGLLLDPYFSGTKIKWILDNVPDARAKAKRGELLFGTVDTWLLWKLTEGKVHVTDPTNAARTLLFNIHSLSWDTTLLEALDIPAAMLPEVRPSCSVYGTTRIAGEGSEIPLAGIAGDQQAALFGQLCVEPGMAKNTYGTGCFLLMNTGNKAVRSSHGLLTTVAVGAQGEVNYALEGSVFMGGATIQWLRDELGLIRDASDTEYFASKVADTNGVYLVPAFVGLGAPYWDPNARGALFGLTRGANRNHIIRAALESIAYQSKDLLDAMIKDSGERLKSLKVDGGAVANDFLMQFQADITDVEVLRPSVCETTALGAAFLAGLAVGFWTSVTELEYKACIDKHFKPNIDASQRERLYVGWQDAVVRTRS</sequence>
<gene>
    <name evidence="1" type="primary">glpK</name>
    <name type="ordered locus">Shewmr4_3583</name>
</gene>